<accession>B2GA54</accession>
<comment type="similarity">
    <text evidence="1">Belongs to the bacterial ribosomal protein bL34 family.</text>
</comment>
<gene>
    <name evidence="1" type="primary">rpmH</name>
    <name type="ordered locus">LAR_1820</name>
</gene>
<organism>
    <name type="scientific">Limosilactobacillus reuteri subsp. reuteri (strain JCM 1112)</name>
    <name type="common">Lactobacillus reuteri</name>
    <dbReference type="NCBI Taxonomy" id="557433"/>
    <lineage>
        <taxon>Bacteria</taxon>
        <taxon>Bacillati</taxon>
        <taxon>Bacillota</taxon>
        <taxon>Bacilli</taxon>
        <taxon>Lactobacillales</taxon>
        <taxon>Lactobacillaceae</taxon>
        <taxon>Limosilactobacillus</taxon>
    </lineage>
</organism>
<dbReference type="EMBL" id="AP007281">
    <property type="protein sequence ID" value="BAG26336.1"/>
    <property type="molecule type" value="Genomic_DNA"/>
</dbReference>
<dbReference type="RefSeq" id="WP_003665227.1">
    <property type="nucleotide sequence ID" value="NC_010609.1"/>
</dbReference>
<dbReference type="SMR" id="B2GA54"/>
<dbReference type="GeneID" id="78174659"/>
<dbReference type="KEGG" id="lrf:LAR_1820"/>
<dbReference type="HOGENOM" id="CLU_129938_2_0_9"/>
<dbReference type="GO" id="GO:1990904">
    <property type="term" value="C:ribonucleoprotein complex"/>
    <property type="evidence" value="ECO:0007669"/>
    <property type="project" value="UniProtKB-KW"/>
</dbReference>
<dbReference type="GO" id="GO:0005840">
    <property type="term" value="C:ribosome"/>
    <property type="evidence" value="ECO:0007669"/>
    <property type="project" value="UniProtKB-KW"/>
</dbReference>
<dbReference type="GO" id="GO:0003735">
    <property type="term" value="F:structural constituent of ribosome"/>
    <property type="evidence" value="ECO:0007669"/>
    <property type="project" value="InterPro"/>
</dbReference>
<dbReference type="GO" id="GO:0006412">
    <property type="term" value="P:translation"/>
    <property type="evidence" value="ECO:0007669"/>
    <property type="project" value="UniProtKB-UniRule"/>
</dbReference>
<dbReference type="FunFam" id="1.10.287.3980:FF:000001">
    <property type="entry name" value="Mitochondrial ribosomal protein L34"/>
    <property type="match status" value="1"/>
</dbReference>
<dbReference type="Gene3D" id="1.10.287.3980">
    <property type="match status" value="1"/>
</dbReference>
<dbReference type="HAMAP" id="MF_00391">
    <property type="entry name" value="Ribosomal_bL34"/>
    <property type="match status" value="1"/>
</dbReference>
<dbReference type="InterPro" id="IPR000271">
    <property type="entry name" value="Ribosomal_bL34"/>
</dbReference>
<dbReference type="InterPro" id="IPR020939">
    <property type="entry name" value="Ribosomal_bL34_CS"/>
</dbReference>
<dbReference type="NCBIfam" id="TIGR01030">
    <property type="entry name" value="rpmH_bact"/>
    <property type="match status" value="1"/>
</dbReference>
<dbReference type="PANTHER" id="PTHR14503:SF4">
    <property type="entry name" value="LARGE RIBOSOMAL SUBUNIT PROTEIN BL34M"/>
    <property type="match status" value="1"/>
</dbReference>
<dbReference type="PANTHER" id="PTHR14503">
    <property type="entry name" value="MITOCHONDRIAL RIBOSOMAL PROTEIN 34 FAMILY MEMBER"/>
    <property type="match status" value="1"/>
</dbReference>
<dbReference type="Pfam" id="PF00468">
    <property type="entry name" value="Ribosomal_L34"/>
    <property type="match status" value="1"/>
</dbReference>
<dbReference type="PROSITE" id="PS00784">
    <property type="entry name" value="RIBOSOMAL_L34"/>
    <property type="match status" value="1"/>
</dbReference>
<protein>
    <recommendedName>
        <fullName evidence="1">Large ribosomal subunit protein bL34</fullName>
    </recommendedName>
    <alternativeName>
        <fullName evidence="3">50S ribosomal protein L34</fullName>
    </alternativeName>
</protein>
<feature type="chain" id="PRO_1000196062" description="Large ribosomal subunit protein bL34">
    <location>
        <begin position="1"/>
        <end position="44"/>
    </location>
</feature>
<feature type="region of interest" description="Disordered" evidence="2">
    <location>
        <begin position="1"/>
        <end position="44"/>
    </location>
</feature>
<feature type="compositionally biased region" description="Basic residues" evidence="2">
    <location>
        <begin position="1"/>
        <end position="22"/>
    </location>
</feature>
<feature type="compositionally biased region" description="Basic residues" evidence="2">
    <location>
        <begin position="30"/>
        <end position="44"/>
    </location>
</feature>
<keyword id="KW-0687">Ribonucleoprotein</keyword>
<keyword id="KW-0689">Ribosomal protein</keyword>
<proteinExistence type="inferred from homology"/>
<sequence length="44" mass="5303">MKRTFQPKKRHRARVHGFRKRMSTSNGRKVLARRRQKGRKVLSA</sequence>
<name>RL34_LIMRJ</name>
<evidence type="ECO:0000255" key="1">
    <source>
        <dbReference type="HAMAP-Rule" id="MF_00391"/>
    </source>
</evidence>
<evidence type="ECO:0000256" key="2">
    <source>
        <dbReference type="SAM" id="MobiDB-lite"/>
    </source>
</evidence>
<evidence type="ECO:0000305" key="3"/>
<reference key="1">
    <citation type="journal article" date="2008" name="DNA Res.">
        <title>Comparative genome analysis of Lactobacillus reuteri and Lactobacillus fermentum reveal a genomic island for reuterin and cobalamin production.</title>
        <authorList>
            <person name="Morita H."/>
            <person name="Toh H."/>
            <person name="Fukuda S."/>
            <person name="Horikawa H."/>
            <person name="Oshima K."/>
            <person name="Suzuki T."/>
            <person name="Murakami M."/>
            <person name="Hisamatsu S."/>
            <person name="Kato Y."/>
            <person name="Takizawa T."/>
            <person name="Fukuoka H."/>
            <person name="Yoshimura T."/>
            <person name="Itoh K."/>
            <person name="O'Sullivan D.J."/>
            <person name="McKay L.L."/>
            <person name="Ohno H."/>
            <person name="Kikuchi J."/>
            <person name="Masaoka T."/>
            <person name="Hattori M."/>
        </authorList>
    </citation>
    <scope>NUCLEOTIDE SEQUENCE [LARGE SCALE GENOMIC DNA]</scope>
    <source>
        <strain>JCM 1112</strain>
    </source>
</reference>